<accession>A1W1V0</accession>
<name>RL14_CAMJJ</name>
<gene>
    <name evidence="1" type="primary">rplN</name>
    <name type="ordered locus">CJJ81176_1694</name>
</gene>
<comment type="function">
    <text evidence="1">Binds to 23S rRNA. Forms part of two intersubunit bridges in the 70S ribosome.</text>
</comment>
<comment type="subunit">
    <text evidence="1">Part of the 50S ribosomal subunit. Forms a cluster with proteins L3 and L19. In the 70S ribosome, L14 and L19 interact and together make contacts with the 16S rRNA in bridges B5 and B8.</text>
</comment>
<comment type="similarity">
    <text evidence="1">Belongs to the universal ribosomal protein uL14 family.</text>
</comment>
<sequence length="122" mass="13306">MIQSFTRLAVADNSGAKELMCIKVLGGSKRRYATVGDVIVASVKKALPNGKVKKGQVVKAVIVRTKKEIHRDNGSLIRFDENAAVILDNKREPIGTRIFGPVGREVRYGGFMKIVSLAPEVL</sequence>
<feature type="chain" id="PRO_1000055546" description="Large ribosomal subunit protein uL14">
    <location>
        <begin position="1"/>
        <end position="122"/>
    </location>
</feature>
<protein>
    <recommendedName>
        <fullName evidence="1">Large ribosomal subunit protein uL14</fullName>
    </recommendedName>
    <alternativeName>
        <fullName evidence="2">50S ribosomal protein L14</fullName>
    </alternativeName>
</protein>
<reference key="1">
    <citation type="submission" date="2006-12" db="EMBL/GenBank/DDBJ databases">
        <authorList>
            <person name="Fouts D.E."/>
            <person name="Nelson K.E."/>
            <person name="Sebastian Y."/>
        </authorList>
    </citation>
    <scope>NUCLEOTIDE SEQUENCE [LARGE SCALE GENOMIC DNA]</scope>
    <source>
        <strain>81-176</strain>
    </source>
</reference>
<proteinExistence type="inferred from homology"/>
<evidence type="ECO:0000255" key="1">
    <source>
        <dbReference type="HAMAP-Rule" id="MF_01367"/>
    </source>
</evidence>
<evidence type="ECO:0000305" key="2"/>
<dbReference type="EMBL" id="CP000538">
    <property type="protein sequence ID" value="EAQ72877.1"/>
    <property type="molecule type" value="Genomic_DNA"/>
</dbReference>
<dbReference type="RefSeq" id="WP_002779438.1">
    <property type="nucleotide sequence ID" value="NC_008787.1"/>
</dbReference>
<dbReference type="SMR" id="A1W1V0"/>
<dbReference type="GeneID" id="66544933"/>
<dbReference type="KEGG" id="cjj:CJJ81176_1694"/>
<dbReference type="eggNOG" id="COG0093">
    <property type="taxonomic scope" value="Bacteria"/>
</dbReference>
<dbReference type="HOGENOM" id="CLU_095071_2_1_7"/>
<dbReference type="Proteomes" id="UP000000646">
    <property type="component" value="Chromosome"/>
</dbReference>
<dbReference type="GO" id="GO:0022625">
    <property type="term" value="C:cytosolic large ribosomal subunit"/>
    <property type="evidence" value="ECO:0007669"/>
    <property type="project" value="TreeGrafter"/>
</dbReference>
<dbReference type="GO" id="GO:0070180">
    <property type="term" value="F:large ribosomal subunit rRNA binding"/>
    <property type="evidence" value="ECO:0007669"/>
    <property type="project" value="TreeGrafter"/>
</dbReference>
<dbReference type="GO" id="GO:0003735">
    <property type="term" value="F:structural constituent of ribosome"/>
    <property type="evidence" value="ECO:0007669"/>
    <property type="project" value="InterPro"/>
</dbReference>
<dbReference type="GO" id="GO:0006412">
    <property type="term" value="P:translation"/>
    <property type="evidence" value="ECO:0007669"/>
    <property type="project" value="UniProtKB-UniRule"/>
</dbReference>
<dbReference type="CDD" id="cd00337">
    <property type="entry name" value="Ribosomal_uL14"/>
    <property type="match status" value="1"/>
</dbReference>
<dbReference type="FunFam" id="2.40.150.20:FF:000001">
    <property type="entry name" value="50S ribosomal protein L14"/>
    <property type="match status" value="1"/>
</dbReference>
<dbReference type="Gene3D" id="2.40.150.20">
    <property type="entry name" value="Ribosomal protein L14"/>
    <property type="match status" value="1"/>
</dbReference>
<dbReference type="HAMAP" id="MF_01367">
    <property type="entry name" value="Ribosomal_uL14"/>
    <property type="match status" value="1"/>
</dbReference>
<dbReference type="InterPro" id="IPR000218">
    <property type="entry name" value="Ribosomal_uL14"/>
</dbReference>
<dbReference type="InterPro" id="IPR005745">
    <property type="entry name" value="Ribosomal_uL14_bac-type"/>
</dbReference>
<dbReference type="InterPro" id="IPR019972">
    <property type="entry name" value="Ribosomal_uL14_CS"/>
</dbReference>
<dbReference type="InterPro" id="IPR036853">
    <property type="entry name" value="Ribosomal_uL14_sf"/>
</dbReference>
<dbReference type="NCBIfam" id="TIGR01067">
    <property type="entry name" value="rplN_bact"/>
    <property type="match status" value="1"/>
</dbReference>
<dbReference type="PANTHER" id="PTHR11761">
    <property type="entry name" value="50S/60S RIBOSOMAL PROTEIN L14/L23"/>
    <property type="match status" value="1"/>
</dbReference>
<dbReference type="PANTHER" id="PTHR11761:SF3">
    <property type="entry name" value="LARGE RIBOSOMAL SUBUNIT PROTEIN UL14M"/>
    <property type="match status" value="1"/>
</dbReference>
<dbReference type="Pfam" id="PF00238">
    <property type="entry name" value="Ribosomal_L14"/>
    <property type="match status" value="1"/>
</dbReference>
<dbReference type="SMART" id="SM01374">
    <property type="entry name" value="Ribosomal_L14"/>
    <property type="match status" value="1"/>
</dbReference>
<dbReference type="SUPFAM" id="SSF50193">
    <property type="entry name" value="Ribosomal protein L14"/>
    <property type="match status" value="1"/>
</dbReference>
<dbReference type="PROSITE" id="PS00049">
    <property type="entry name" value="RIBOSOMAL_L14"/>
    <property type="match status" value="1"/>
</dbReference>
<organism>
    <name type="scientific">Campylobacter jejuni subsp. jejuni serotype O:23/36 (strain 81-176)</name>
    <dbReference type="NCBI Taxonomy" id="354242"/>
    <lineage>
        <taxon>Bacteria</taxon>
        <taxon>Pseudomonadati</taxon>
        <taxon>Campylobacterota</taxon>
        <taxon>Epsilonproteobacteria</taxon>
        <taxon>Campylobacterales</taxon>
        <taxon>Campylobacteraceae</taxon>
        <taxon>Campylobacter</taxon>
    </lineage>
</organism>
<keyword id="KW-0687">Ribonucleoprotein</keyword>
<keyword id="KW-0689">Ribosomal protein</keyword>
<keyword id="KW-0694">RNA-binding</keyword>
<keyword id="KW-0699">rRNA-binding</keyword>